<proteinExistence type="predicted"/>
<gene>
    <name type="ordered locus">Os08g0242700</name>
    <name type="ordered locus">LOC_Os08g14440</name>
</gene>
<comment type="subcellular location">
    <subcellularLocation>
        <location evidence="4">Plastid</location>
        <location evidence="4">Chloroplast</location>
    </subcellularLocation>
</comment>
<comment type="sequence caution" evidence="4">
    <conflict type="erroneous gene model prediction">
        <sequence resource="EMBL-CDS" id="BAF23256"/>
    </conflict>
</comment>
<accession>Q0J709</accession>
<feature type="transit peptide" description="Chloroplast" evidence="1">
    <location>
        <begin position="1"/>
        <end position="56"/>
    </location>
</feature>
<feature type="chain" id="PRO_0000330728" description="ACT domain-containing protein DS12, chloroplastic">
    <location>
        <begin position="57"/>
        <end position="283"/>
    </location>
</feature>
<feature type="domain" description="ACT 1" evidence="2">
    <location>
        <begin position="91"/>
        <end position="171"/>
    </location>
</feature>
<feature type="domain" description="ACT 2" evidence="2">
    <location>
        <begin position="206"/>
        <end position="276"/>
    </location>
</feature>
<feature type="region of interest" description="Disordered" evidence="3">
    <location>
        <begin position="14"/>
        <end position="78"/>
    </location>
</feature>
<feature type="compositionally biased region" description="Low complexity" evidence="3">
    <location>
        <begin position="48"/>
        <end position="63"/>
    </location>
</feature>
<organism>
    <name type="scientific">Oryza sativa subsp. japonica</name>
    <name type="common">Rice</name>
    <dbReference type="NCBI Taxonomy" id="39947"/>
    <lineage>
        <taxon>Eukaryota</taxon>
        <taxon>Viridiplantae</taxon>
        <taxon>Streptophyta</taxon>
        <taxon>Embryophyta</taxon>
        <taxon>Tracheophyta</taxon>
        <taxon>Spermatophyta</taxon>
        <taxon>Magnoliopsida</taxon>
        <taxon>Liliopsida</taxon>
        <taxon>Poales</taxon>
        <taxon>Poaceae</taxon>
        <taxon>BOP clade</taxon>
        <taxon>Oryzoideae</taxon>
        <taxon>Oryzeae</taxon>
        <taxon>Oryzinae</taxon>
        <taxon>Oryza</taxon>
        <taxon>Oryza sativa</taxon>
    </lineage>
</organism>
<keyword id="KW-0150">Chloroplast</keyword>
<keyword id="KW-0934">Plastid</keyword>
<keyword id="KW-1185">Reference proteome</keyword>
<keyword id="KW-0677">Repeat</keyword>
<keyword id="KW-0809">Transit peptide</keyword>
<name>UP12_ORYSJ</name>
<protein>
    <recommendedName>
        <fullName evidence="4">ACT domain-containing protein DS12, chloroplastic</fullName>
    </recommendedName>
    <alternativeName>
        <fullName>Uncharacterized protein DS12 from 2D-PAGE of leaf</fullName>
    </alternativeName>
</protein>
<reference key="1">
    <citation type="journal article" date="2005" name="Nature">
        <title>The map-based sequence of the rice genome.</title>
        <authorList>
            <consortium name="International rice genome sequencing project (IRGSP)"/>
        </authorList>
    </citation>
    <scope>NUCLEOTIDE SEQUENCE [LARGE SCALE GENOMIC DNA]</scope>
    <source>
        <strain>cv. Nipponbare</strain>
    </source>
</reference>
<reference key="2">
    <citation type="journal article" date="2008" name="Nucleic Acids Res.">
        <title>The rice annotation project database (RAP-DB): 2008 update.</title>
        <authorList>
            <consortium name="The rice annotation project (RAP)"/>
        </authorList>
    </citation>
    <scope>GENOME REANNOTATION</scope>
    <source>
        <strain>cv. Nipponbare</strain>
    </source>
</reference>
<reference key="3">
    <citation type="journal article" date="2013" name="Rice">
        <title>Improvement of the Oryza sativa Nipponbare reference genome using next generation sequence and optical map data.</title>
        <authorList>
            <person name="Kawahara Y."/>
            <person name="de la Bastide M."/>
            <person name="Hamilton J.P."/>
            <person name="Kanamori H."/>
            <person name="McCombie W.R."/>
            <person name="Ouyang S."/>
            <person name="Schwartz D.C."/>
            <person name="Tanaka T."/>
            <person name="Wu J."/>
            <person name="Zhou S."/>
            <person name="Childs K.L."/>
            <person name="Davidson R.M."/>
            <person name="Lin H."/>
            <person name="Quesada-Ocampo L."/>
            <person name="Vaillancourt B."/>
            <person name="Sakai H."/>
            <person name="Lee S.S."/>
            <person name="Kim J."/>
            <person name="Numa H."/>
            <person name="Itoh T."/>
            <person name="Buell C.R."/>
            <person name="Matsumoto T."/>
        </authorList>
    </citation>
    <scope>GENOME REANNOTATION</scope>
    <source>
        <strain>cv. Nipponbare</strain>
    </source>
</reference>
<dbReference type="EMBL" id="AP008214">
    <property type="protein sequence ID" value="BAF23256.1"/>
    <property type="status" value="ALT_SEQ"/>
    <property type="molecule type" value="Genomic_DNA"/>
</dbReference>
<dbReference type="EMBL" id="AP014964">
    <property type="status" value="NOT_ANNOTATED_CDS"/>
    <property type="molecule type" value="Genomic_DNA"/>
</dbReference>
<dbReference type="RefSeq" id="XP_015651085.1">
    <property type="nucleotide sequence ID" value="XM_015795599.1"/>
</dbReference>
<dbReference type="FunCoup" id="Q0J709">
    <property type="interactions" value="1336"/>
</dbReference>
<dbReference type="STRING" id="39947.Q0J709"/>
<dbReference type="PaxDb" id="39947-Q0J709"/>
<dbReference type="eggNOG" id="ENOG502QWKY">
    <property type="taxonomic scope" value="Eukaryota"/>
</dbReference>
<dbReference type="InParanoid" id="Q0J709"/>
<dbReference type="OrthoDB" id="496180at2759"/>
<dbReference type="Proteomes" id="UP000000763">
    <property type="component" value="Chromosome 8"/>
</dbReference>
<dbReference type="Proteomes" id="UP000059680">
    <property type="component" value="Chromosome 8"/>
</dbReference>
<dbReference type="GO" id="GO:0009507">
    <property type="term" value="C:chloroplast"/>
    <property type="evidence" value="ECO:0007669"/>
    <property type="project" value="UniProtKB-SubCell"/>
</dbReference>
<dbReference type="CDD" id="cd04873">
    <property type="entry name" value="ACT_UUR-ACR-like"/>
    <property type="match status" value="1"/>
</dbReference>
<dbReference type="InterPro" id="IPR040217">
    <property type="entry name" value="ACR1-12"/>
</dbReference>
<dbReference type="InterPro" id="IPR045865">
    <property type="entry name" value="ACT-like_dom_sf"/>
</dbReference>
<dbReference type="PANTHER" id="PTHR31096:SF16">
    <property type="entry name" value="ACT DOMAIN-CONTAINING PROTEIN ACR11"/>
    <property type="match status" value="1"/>
</dbReference>
<dbReference type="PANTHER" id="PTHR31096">
    <property type="entry name" value="ACT DOMAIN-CONTAINING PROTEIN ACR4-RELATED"/>
    <property type="match status" value="1"/>
</dbReference>
<dbReference type="SUPFAM" id="SSF55021">
    <property type="entry name" value="ACT-like"/>
    <property type="match status" value="1"/>
</dbReference>
<evidence type="ECO:0000255" key="1"/>
<evidence type="ECO:0000255" key="2">
    <source>
        <dbReference type="PROSITE-ProRule" id="PRU01007"/>
    </source>
</evidence>
<evidence type="ECO:0000256" key="3">
    <source>
        <dbReference type="SAM" id="MobiDB-lite"/>
    </source>
</evidence>
<evidence type="ECO:0000305" key="4"/>
<sequence length="283" mass="30323">MAEMAVTAALRPCSGVSPAVSGTSHRRRRPAAWRALAPPPPHAGLRLSSPAVRVPRAASSAAVEDGSSSNTDTVPTPKVIIDQDSDPDATIVEITLGDRLGDLLDTMNALKNLGLNVVKASVCLDSTGKHIKLAITKLSTGRKIGEPELLEAVRLTIINNMIQYHPEASSQLALGATFGPEPPTELVDVDIATHIDIYDDGPDRSLLVVETADRPGLLVDLVKIIDDINITVQSGEFDTEGLLAKAKFHVSYRGKPLIKALQQVLANSLRYFLRRPTTEEGSY</sequence>